<protein>
    <recommendedName>
        <fullName evidence="1">Proline--tRNA ligase</fullName>
        <ecNumber evidence="1">6.1.1.15</ecNumber>
    </recommendedName>
    <alternativeName>
        <fullName evidence="1">Prolyl-tRNA synthetase</fullName>
        <shortName evidence="1">ProRS</shortName>
    </alternativeName>
</protein>
<keyword id="KW-0030">Aminoacyl-tRNA synthetase</keyword>
<keyword id="KW-0067">ATP-binding</keyword>
<keyword id="KW-0963">Cytoplasm</keyword>
<keyword id="KW-0436">Ligase</keyword>
<keyword id="KW-0547">Nucleotide-binding</keyword>
<keyword id="KW-0648">Protein biosynthesis</keyword>
<keyword id="KW-1185">Reference proteome</keyword>
<name>SYP_CHLAA</name>
<accession>A9W9Q2</accession>
<organism>
    <name type="scientific">Chloroflexus aurantiacus (strain ATCC 29366 / DSM 635 / J-10-fl)</name>
    <dbReference type="NCBI Taxonomy" id="324602"/>
    <lineage>
        <taxon>Bacteria</taxon>
        <taxon>Bacillati</taxon>
        <taxon>Chloroflexota</taxon>
        <taxon>Chloroflexia</taxon>
        <taxon>Chloroflexales</taxon>
        <taxon>Chloroflexineae</taxon>
        <taxon>Chloroflexaceae</taxon>
        <taxon>Chloroflexus</taxon>
    </lineage>
</organism>
<sequence length="480" mass="54885">MPKEVITQRSVDYNQWYLDIVREADLAEVAEVVRGCIVVKAHGWAIWELMQRALDDRIKATGHANVQFPLLIPKSFIMKEAEHVEGFAPEVAEVTRAGGEELAEPYIIRPTSETIIGYFYSKWIRSYRDLPLLYNQWANVMRWEMRTRPFLRTAEFWWQEGHTAHATEAEAEEETLRILHDVYADFVEKEMAVPVIRGLKTEKEKFPGALRSYCIEAMMQDGRALQAGTSHNLGQNFARAFDITFTDQNNTIQYAWTTSWGVSTRLIGALIMTHSDDEGLVLPPRLAPIQVVVVPIYKNDEERSLVMAAVEQMTAAWKGRLRFKVDDRDNYSPGYKFNEWELKGVPVRIEVGPKDVAKETVALARRDIPGKAGKSFVPQAGLTERIEALLNEMQTALFQRALAFREAHTADVTSYDELKEQIERGFARAYWAGDTADEKRIQEETRATIRCIPLEQPGSVGRCVYTGRETDRQVIFARAY</sequence>
<comment type="function">
    <text evidence="1">Catalyzes the attachment of proline to tRNA(Pro) in a two-step reaction: proline is first activated by ATP to form Pro-AMP and then transferred to the acceptor end of tRNA(Pro).</text>
</comment>
<comment type="catalytic activity">
    <reaction evidence="1">
        <text>tRNA(Pro) + L-proline + ATP = L-prolyl-tRNA(Pro) + AMP + diphosphate</text>
        <dbReference type="Rhea" id="RHEA:14305"/>
        <dbReference type="Rhea" id="RHEA-COMP:9700"/>
        <dbReference type="Rhea" id="RHEA-COMP:9702"/>
        <dbReference type="ChEBI" id="CHEBI:30616"/>
        <dbReference type="ChEBI" id="CHEBI:33019"/>
        <dbReference type="ChEBI" id="CHEBI:60039"/>
        <dbReference type="ChEBI" id="CHEBI:78442"/>
        <dbReference type="ChEBI" id="CHEBI:78532"/>
        <dbReference type="ChEBI" id="CHEBI:456215"/>
        <dbReference type="EC" id="6.1.1.15"/>
    </reaction>
</comment>
<comment type="subunit">
    <text evidence="1">Homodimer.</text>
</comment>
<comment type="subcellular location">
    <subcellularLocation>
        <location evidence="1">Cytoplasm</location>
    </subcellularLocation>
</comment>
<comment type="domain">
    <text evidence="1">Consists of three domains: the N-terminal catalytic domain, the anticodon-binding domain and the C-terminal extension.</text>
</comment>
<comment type="similarity">
    <text evidence="1">Belongs to the class-II aminoacyl-tRNA synthetase family. ProS type 3 subfamily.</text>
</comment>
<feature type="chain" id="PRO_1000215548" description="Proline--tRNA ligase">
    <location>
        <begin position="1"/>
        <end position="480"/>
    </location>
</feature>
<dbReference type="EC" id="6.1.1.15" evidence="1"/>
<dbReference type="EMBL" id="CP000909">
    <property type="protein sequence ID" value="ABY34538.1"/>
    <property type="molecule type" value="Genomic_DNA"/>
</dbReference>
<dbReference type="RefSeq" id="WP_012257194.1">
    <property type="nucleotide sequence ID" value="NC_010175.1"/>
</dbReference>
<dbReference type="RefSeq" id="YP_001634927.1">
    <property type="nucleotide sequence ID" value="NC_010175.1"/>
</dbReference>
<dbReference type="SMR" id="A9W9Q2"/>
<dbReference type="STRING" id="324602.Caur_1310"/>
<dbReference type="EnsemblBacteria" id="ABY34538">
    <property type="protein sequence ID" value="ABY34538"/>
    <property type="gene ID" value="Caur_1310"/>
</dbReference>
<dbReference type="KEGG" id="cau:Caur_1310"/>
<dbReference type="PATRIC" id="fig|324602.8.peg.1499"/>
<dbReference type="eggNOG" id="COG0442">
    <property type="taxonomic scope" value="Bacteria"/>
</dbReference>
<dbReference type="HOGENOM" id="CLU_001882_4_2_0"/>
<dbReference type="InParanoid" id="A9W9Q2"/>
<dbReference type="Proteomes" id="UP000002008">
    <property type="component" value="Chromosome"/>
</dbReference>
<dbReference type="GO" id="GO:0017101">
    <property type="term" value="C:aminoacyl-tRNA synthetase multienzyme complex"/>
    <property type="evidence" value="ECO:0000318"/>
    <property type="project" value="GO_Central"/>
</dbReference>
<dbReference type="GO" id="GO:0005737">
    <property type="term" value="C:cytoplasm"/>
    <property type="evidence" value="ECO:0000318"/>
    <property type="project" value="GO_Central"/>
</dbReference>
<dbReference type="GO" id="GO:0005524">
    <property type="term" value="F:ATP binding"/>
    <property type="evidence" value="ECO:0007669"/>
    <property type="project" value="UniProtKB-UniRule"/>
</dbReference>
<dbReference type="GO" id="GO:0004827">
    <property type="term" value="F:proline-tRNA ligase activity"/>
    <property type="evidence" value="ECO:0000318"/>
    <property type="project" value="GO_Central"/>
</dbReference>
<dbReference type="GO" id="GO:0006433">
    <property type="term" value="P:prolyl-tRNA aminoacylation"/>
    <property type="evidence" value="ECO:0000318"/>
    <property type="project" value="GO_Central"/>
</dbReference>
<dbReference type="CDD" id="cd00862">
    <property type="entry name" value="ProRS_anticodon_zinc"/>
    <property type="match status" value="1"/>
</dbReference>
<dbReference type="CDD" id="cd00778">
    <property type="entry name" value="ProRS_core_arch_euk"/>
    <property type="match status" value="1"/>
</dbReference>
<dbReference type="FunFam" id="3.30.930.10:FF:000023">
    <property type="entry name" value="Proline--tRNA ligase"/>
    <property type="match status" value="1"/>
</dbReference>
<dbReference type="FunFam" id="3.40.50.800:FF:000073">
    <property type="entry name" value="Proline--tRNA ligase"/>
    <property type="match status" value="1"/>
</dbReference>
<dbReference type="Gene3D" id="3.40.50.800">
    <property type="entry name" value="Anticodon-binding domain"/>
    <property type="match status" value="1"/>
</dbReference>
<dbReference type="Gene3D" id="3.30.930.10">
    <property type="entry name" value="Bira Bifunctional Protein, Domain 2"/>
    <property type="match status" value="1"/>
</dbReference>
<dbReference type="Gene3D" id="3.30.110.30">
    <property type="entry name" value="C-terminal domain of ProRS"/>
    <property type="match status" value="1"/>
</dbReference>
<dbReference type="HAMAP" id="MF_01571">
    <property type="entry name" value="Pro_tRNA_synth_type3"/>
    <property type="match status" value="1"/>
</dbReference>
<dbReference type="InterPro" id="IPR002314">
    <property type="entry name" value="aa-tRNA-synt_IIb"/>
</dbReference>
<dbReference type="InterPro" id="IPR006195">
    <property type="entry name" value="aa-tRNA-synth_II"/>
</dbReference>
<dbReference type="InterPro" id="IPR045864">
    <property type="entry name" value="aa-tRNA-synth_II/BPL/LPL"/>
</dbReference>
<dbReference type="InterPro" id="IPR004154">
    <property type="entry name" value="Anticodon-bd"/>
</dbReference>
<dbReference type="InterPro" id="IPR036621">
    <property type="entry name" value="Anticodon-bd_dom_sf"/>
</dbReference>
<dbReference type="InterPro" id="IPR002316">
    <property type="entry name" value="Pro-tRNA-ligase_IIa"/>
</dbReference>
<dbReference type="InterPro" id="IPR004499">
    <property type="entry name" value="Pro-tRNA-ligase_IIa_arc-type"/>
</dbReference>
<dbReference type="InterPro" id="IPR016061">
    <property type="entry name" value="Pro-tRNA_ligase_II_C"/>
</dbReference>
<dbReference type="InterPro" id="IPR017449">
    <property type="entry name" value="Pro-tRNA_synth_II"/>
</dbReference>
<dbReference type="InterPro" id="IPR033721">
    <property type="entry name" value="ProRS_core_arch_euk"/>
</dbReference>
<dbReference type="NCBIfam" id="TIGR00408">
    <property type="entry name" value="proS_fam_I"/>
    <property type="match status" value="1"/>
</dbReference>
<dbReference type="PANTHER" id="PTHR43382:SF2">
    <property type="entry name" value="BIFUNCTIONAL GLUTAMATE_PROLINE--TRNA LIGASE"/>
    <property type="match status" value="1"/>
</dbReference>
<dbReference type="PANTHER" id="PTHR43382">
    <property type="entry name" value="PROLYL-TRNA SYNTHETASE"/>
    <property type="match status" value="1"/>
</dbReference>
<dbReference type="Pfam" id="PF03129">
    <property type="entry name" value="HGTP_anticodon"/>
    <property type="match status" value="1"/>
</dbReference>
<dbReference type="Pfam" id="PF09180">
    <property type="entry name" value="ProRS-C_1"/>
    <property type="match status" value="1"/>
</dbReference>
<dbReference type="Pfam" id="PF00587">
    <property type="entry name" value="tRNA-synt_2b"/>
    <property type="match status" value="1"/>
</dbReference>
<dbReference type="PRINTS" id="PR01046">
    <property type="entry name" value="TRNASYNTHPRO"/>
</dbReference>
<dbReference type="SMART" id="SM00946">
    <property type="entry name" value="ProRS-C_1"/>
    <property type="match status" value="1"/>
</dbReference>
<dbReference type="SUPFAM" id="SSF64586">
    <property type="entry name" value="C-terminal domain of ProRS"/>
    <property type="match status" value="1"/>
</dbReference>
<dbReference type="SUPFAM" id="SSF52954">
    <property type="entry name" value="Class II aaRS ABD-related"/>
    <property type="match status" value="1"/>
</dbReference>
<dbReference type="SUPFAM" id="SSF55681">
    <property type="entry name" value="Class II aaRS and biotin synthetases"/>
    <property type="match status" value="1"/>
</dbReference>
<dbReference type="PROSITE" id="PS50862">
    <property type="entry name" value="AA_TRNA_LIGASE_II"/>
    <property type="match status" value="1"/>
</dbReference>
<proteinExistence type="inferred from homology"/>
<reference key="1">
    <citation type="journal article" date="2011" name="BMC Genomics">
        <title>Complete genome sequence of the filamentous anoxygenic phototrophic bacterium Chloroflexus aurantiacus.</title>
        <authorList>
            <person name="Tang K.H."/>
            <person name="Barry K."/>
            <person name="Chertkov O."/>
            <person name="Dalin E."/>
            <person name="Han C.S."/>
            <person name="Hauser L.J."/>
            <person name="Honchak B.M."/>
            <person name="Karbach L.E."/>
            <person name="Land M.L."/>
            <person name="Lapidus A."/>
            <person name="Larimer F.W."/>
            <person name="Mikhailova N."/>
            <person name="Pitluck S."/>
            <person name="Pierson B.K."/>
            <person name="Blankenship R.E."/>
        </authorList>
    </citation>
    <scope>NUCLEOTIDE SEQUENCE [LARGE SCALE GENOMIC DNA]</scope>
    <source>
        <strain>ATCC 29366 / DSM 635 / J-10-fl</strain>
    </source>
</reference>
<evidence type="ECO:0000255" key="1">
    <source>
        <dbReference type="HAMAP-Rule" id="MF_01571"/>
    </source>
</evidence>
<gene>
    <name evidence="1" type="primary">proS</name>
    <name type="ordered locus">Caur_1310</name>
</gene>